<accession>A4QE51</accession>
<evidence type="ECO:0000255" key="1">
    <source>
        <dbReference type="HAMAP-Rule" id="MF_00228"/>
    </source>
</evidence>
<protein>
    <recommendedName>
        <fullName evidence="1">Hydroxyethylthiazole kinase</fullName>
        <ecNumber evidence="1">2.7.1.50</ecNumber>
    </recommendedName>
    <alternativeName>
        <fullName evidence="1">4-methyl-5-beta-hydroxyethylthiazole kinase</fullName>
        <shortName evidence="1">TH kinase</shortName>
        <shortName evidence="1">Thz kinase</shortName>
    </alternativeName>
</protein>
<keyword id="KW-0067">ATP-binding</keyword>
<keyword id="KW-0418">Kinase</keyword>
<keyword id="KW-0460">Magnesium</keyword>
<keyword id="KW-0479">Metal-binding</keyword>
<keyword id="KW-0547">Nucleotide-binding</keyword>
<keyword id="KW-0784">Thiamine biosynthesis</keyword>
<keyword id="KW-0808">Transferase</keyword>
<dbReference type="EC" id="2.7.1.50" evidence="1"/>
<dbReference type="EMBL" id="AP009044">
    <property type="protein sequence ID" value="BAF54517.1"/>
    <property type="molecule type" value="Genomic_DNA"/>
</dbReference>
<dbReference type="RefSeq" id="WP_003856212.1">
    <property type="nucleotide sequence ID" value="NC_009342.1"/>
</dbReference>
<dbReference type="SMR" id="A4QE51"/>
<dbReference type="KEGG" id="cgt:cgR_1525"/>
<dbReference type="HOGENOM" id="CLU_019943_0_1_11"/>
<dbReference type="PhylomeDB" id="A4QE51"/>
<dbReference type="UniPathway" id="UPA00060">
    <property type="reaction ID" value="UER00139"/>
</dbReference>
<dbReference type="Proteomes" id="UP000006698">
    <property type="component" value="Chromosome"/>
</dbReference>
<dbReference type="GO" id="GO:0005524">
    <property type="term" value="F:ATP binding"/>
    <property type="evidence" value="ECO:0007669"/>
    <property type="project" value="UniProtKB-UniRule"/>
</dbReference>
<dbReference type="GO" id="GO:0004417">
    <property type="term" value="F:hydroxyethylthiazole kinase activity"/>
    <property type="evidence" value="ECO:0007669"/>
    <property type="project" value="UniProtKB-UniRule"/>
</dbReference>
<dbReference type="GO" id="GO:0000287">
    <property type="term" value="F:magnesium ion binding"/>
    <property type="evidence" value="ECO:0007669"/>
    <property type="project" value="UniProtKB-UniRule"/>
</dbReference>
<dbReference type="GO" id="GO:0009228">
    <property type="term" value="P:thiamine biosynthetic process"/>
    <property type="evidence" value="ECO:0007669"/>
    <property type="project" value="UniProtKB-KW"/>
</dbReference>
<dbReference type="GO" id="GO:0009229">
    <property type="term" value="P:thiamine diphosphate biosynthetic process"/>
    <property type="evidence" value="ECO:0007669"/>
    <property type="project" value="UniProtKB-UniRule"/>
</dbReference>
<dbReference type="CDD" id="cd01170">
    <property type="entry name" value="THZ_kinase"/>
    <property type="match status" value="1"/>
</dbReference>
<dbReference type="Gene3D" id="3.40.1190.20">
    <property type="match status" value="1"/>
</dbReference>
<dbReference type="HAMAP" id="MF_00228">
    <property type="entry name" value="Thz_kinase"/>
    <property type="match status" value="1"/>
</dbReference>
<dbReference type="InterPro" id="IPR000417">
    <property type="entry name" value="Hyethyz_kinase"/>
</dbReference>
<dbReference type="InterPro" id="IPR029056">
    <property type="entry name" value="Ribokinase-like"/>
</dbReference>
<dbReference type="NCBIfam" id="NF006830">
    <property type="entry name" value="PRK09355.1"/>
    <property type="match status" value="1"/>
</dbReference>
<dbReference type="Pfam" id="PF02110">
    <property type="entry name" value="HK"/>
    <property type="match status" value="1"/>
</dbReference>
<dbReference type="PIRSF" id="PIRSF000513">
    <property type="entry name" value="Thz_kinase"/>
    <property type="match status" value="1"/>
</dbReference>
<dbReference type="PRINTS" id="PR01099">
    <property type="entry name" value="HYETHTZKNASE"/>
</dbReference>
<dbReference type="SUPFAM" id="SSF53613">
    <property type="entry name" value="Ribokinase-like"/>
    <property type="match status" value="1"/>
</dbReference>
<organism>
    <name type="scientific">Corynebacterium glutamicum (strain R)</name>
    <dbReference type="NCBI Taxonomy" id="340322"/>
    <lineage>
        <taxon>Bacteria</taxon>
        <taxon>Bacillati</taxon>
        <taxon>Actinomycetota</taxon>
        <taxon>Actinomycetes</taxon>
        <taxon>Mycobacteriales</taxon>
        <taxon>Corynebacteriaceae</taxon>
        <taxon>Corynebacterium</taxon>
    </lineage>
</organism>
<reference key="1">
    <citation type="journal article" date="2007" name="Microbiology">
        <title>Comparative analysis of the Corynebacterium glutamicum group and complete genome sequence of strain R.</title>
        <authorList>
            <person name="Yukawa H."/>
            <person name="Omumasaba C.A."/>
            <person name="Nonaka H."/>
            <person name="Kos P."/>
            <person name="Okai N."/>
            <person name="Suzuki N."/>
            <person name="Suda M."/>
            <person name="Tsuge Y."/>
            <person name="Watanabe J."/>
            <person name="Ikeda Y."/>
            <person name="Vertes A.A."/>
            <person name="Inui M."/>
        </authorList>
    </citation>
    <scope>NUCLEOTIDE SEQUENCE [LARGE SCALE GENOMIC DNA]</scope>
    <source>
        <strain>R</strain>
    </source>
</reference>
<name>THIM_CORGB</name>
<sequence>MANSFLDSLTLVRQNTPLVQCLTNSVVMQFTANVLLAAGATPAMVDTPAESAEFAAVANGVLINAGTPSAEQYQGMTKAIEGARKAGTPWVLDPVAVGGLSERTKYAEGIVDKQPAAIRGNASEVVALAGLGAGGRGVDATDSVEAALEAAQLLAKRTGGVVAVSGAEDLIVSADRVTWLRSGDPMLQLVIGTGCSLGALTAAYLGATVDSDISAHDAVLAAHAHVGAAGQIAAQKASAPGSFAVAFIDALYDVDAQAVASLVDVREA</sequence>
<feature type="chain" id="PRO_1000021507" description="Hydroxyethylthiazole kinase">
    <location>
        <begin position="1"/>
        <end position="268"/>
    </location>
</feature>
<feature type="binding site" evidence="1">
    <location>
        <position position="44"/>
    </location>
    <ligand>
        <name>substrate</name>
    </ligand>
</feature>
<feature type="binding site" evidence="1">
    <location>
        <position position="119"/>
    </location>
    <ligand>
        <name>ATP</name>
        <dbReference type="ChEBI" id="CHEBI:30616"/>
    </ligand>
</feature>
<feature type="binding site" evidence="1">
    <location>
        <position position="165"/>
    </location>
    <ligand>
        <name>ATP</name>
        <dbReference type="ChEBI" id="CHEBI:30616"/>
    </ligand>
</feature>
<feature type="binding site" evidence="1">
    <location>
        <position position="192"/>
    </location>
    <ligand>
        <name>substrate</name>
    </ligand>
</feature>
<gene>
    <name evidence="1" type="primary">thiM</name>
    <name type="ordered locus">cgR_1525</name>
</gene>
<proteinExistence type="inferred from homology"/>
<comment type="function">
    <text evidence="1">Catalyzes the phosphorylation of the hydroxyl group of 4-methyl-5-beta-hydroxyethylthiazole (THZ).</text>
</comment>
<comment type="catalytic activity">
    <reaction evidence="1">
        <text>5-(2-hydroxyethyl)-4-methylthiazole + ATP = 4-methyl-5-(2-phosphooxyethyl)-thiazole + ADP + H(+)</text>
        <dbReference type="Rhea" id="RHEA:24212"/>
        <dbReference type="ChEBI" id="CHEBI:15378"/>
        <dbReference type="ChEBI" id="CHEBI:17957"/>
        <dbReference type="ChEBI" id="CHEBI:30616"/>
        <dbReference type="ChEBI" id="CHEBI:58296"/>
        <dbReference type="ChEBI" id="CHEBI:456216"/>
        <dbReference type="EC" id="2.7.1.50"/>
    </reaction>
</comment>
<comment type="cofactor">
    <cofactor evidence="1">
        <name>Mg(2+)</name>
        <dbReference type="ChEBI" id="CHEBI:18420"/>
    </cofactor>
</comment>
<comment type="pathway">
    <text evidence="1">Cofactor biosynthesis; thiamine diphosphate biosynthesis; 4-methyl-5-(2-phosphoethyl)-thiazole from 5-(2-hydroxyethyl)-4-methylthiazole: step 1/1.</text>
</comment>
<comment type="similarity">
    <text evidence="1">Belongs to the Thz kinase family.</text>
</comment>